<gene>
    <name evidence="1" type="primary">leuC</name>
    <name type="ordered locus">sce0086</name>
</gene>
<comment type="function">
    <text evidence="1">Catalyzes the isomerization between 2-isopropylmalate and 3-isopropylmalate, via the formation of 2-isopropylmaleate.</text>
</comment>
<comment type="catalytic activity">
    <reaction evidence="1">
        <text>(2R,3S)-3-isopropylmalate = (2S)-2-isopropylmalate</text>
        <dbReference type="Rhea" id="RHEA:32287"/>
        <dbReference type="ChEBI" id="CHEBI:1178"/>
        <dbReference type="ChEBI" id="CHEBI:35121"/>
        <dbReference type="EC" id="4.2.1.33"/>
    </reaction>
</comment>
<comment type="cofactor">
    <cofactor evidence="1">
        <name>[4Fe-4S] cluster</name>
        <dbReference type="ChEBI" id="CHEBI:49883"/>
    </cofactor>
    <text evidence="1">Binds 1 [4Fe-4S] cluster per subunit.</text>
</comment>
<comment type="pathway">
    <text evidence="1">Amino-acid biosynthesis; L-leucine biosynthesis; L-leucine from 3-methyl-2-oxobutanoate: step 2/4.</text>
</comment>
<comment type="subunit">
    <text evidence="1">Heterodimer of LeuC and LeuD.</text>
</comment>
<comment type="similarity">
    <text evidence="1">Belongs to the aconitase/IPM isomerase family. LeuC type 1 subfamily.</text>
</comment>
<name>LEUC_SORC5</name>
<feature type="chain" id="PRO_1000084229" description="3-isopropylmalate dehydratase large subunit">
    <location>
        <begin position="1"/>
        <end position="469"/>
    </location>
</feature>
<feature type="binding site" evidence="1">
    <location>
        <position position="347"/>
    </location>
    <ligand>
        <name>[4Fe-4S] cluster</name>
        <dbReference type="ChEBI" id="CHEBI:49883"/>
    </ligand>
</feature>
<feature type="binding site" evidence="1">
    <location>
        <position position="407"/>
    </location>
    <ligand>
        <name>[4Fe-4S] cluster</name>
        <dbReference type="ChEBI" id="CHEBI:49883"/>
    </ligand>
</feature>
<feature type="binding site" evidence="1">
    <location>
        <position position="410"/>
    </location>
    <ligand>
        <name>[4Fe-4S] cluster</name>
        <dbReference type="ChEBI" id="CHEBI:49883"/>
    </ligand>
</feature>
<accession>A9GL99</accession>
<organism>
    <name type="scientific">Sorangium cellulosum (strain So ce56)</name>
    <name type="common">Polyangium cellulosum (strain So ce56)</name>
    <dbReference type="NCBI Taxonomy" id="448385"/>
    <lineage>
        <taxon>Bacteria</taxon>
        <taxon>Pseudomonadati</taxon>
        <taxon>Myxococcota</taxon>
        <taxon>Polyangia</taxon>
        <taxon>Polyangiales</taxon>
        <taxon>Polyangiaceae</taxon>
        <taxon>Sorangium</taxon>
    </lineage>
</organism>
<sequence length="469" mass="51197">MGKSLYDKVWDLHKVRTLPSGEDQLFIGLHLIHEVTSPQAFGMLRDLGLRVSMPERTFATLDHIVPTDNRKRPFKDTLAEGMVDALKKACTEQGVTFFDLESGKQGIVHIIGPELGLTQPGMTIACGDSHTSTHGAFGAIAFGIGTTQVRDVLATQTLSLQRLKVRRIQVEGKLGPGVYAKDIILEIIRRLGVSGGTGYAYEYGGSTIEGFSMEERMTLCNMSIEGGARVGYVNPDQVTFEYMKGRPYAPKGEAWEKALEYWRSIASDEDARYDDVVRINASEIAPTVTWGITPGQAISVKEKVPAAEDVTNESERALIREALEYMRLEGGKPIEGTKINVAFIGSCTNGRLSDFREVARRIQGHRVAPHVRALAVPGSMEVARAAEAEGLDRVFREAGFEWREPGCSMCLAMNPDKLIGDELCASSSNRNFKGRQGSPTGRTVLMSPVMVAAAAVRGEIADARDVFGI</sequence>
<evidence type="ECO:0000255" key="1">
    <source>
        <dbReference type="HAMAP-Rule" id="MF_01026"/>
    </source>
</evidence>
<keyword id="KW-0004">4Fe-4S</keyword>
<keyword id="KW-0028">Amino-acid biosynthesis</keyword>
<keyword id="KW-0100">Branched-chain amino acid biosynthesis</keyword>
<keyword id="KW-0408">Iron</keyword>
<keyword id="KW-0411">Iron-sulfur</keyword>
<keyword id="KW-0432">Leucine biosynthesis</keyword>
<keyword id="KW-0456">Lyase</keyword>
<keyword id="KW-0479">Metal-binding</keyword>
<keyword id="KW-1185">Reference proteome</keyword>
<proteinExistence type="inferred from homology"/>
<dbReference type="EC" id="4.2.1.33" evidence="1"/>
<dbReference type="EMBL" id="AM746676">
    <property type="protein sequence ID" value="CAN90243.1"/>
    <property type="molecule type" value="Genomic_DNA"/>
</dbReference>
<dbReference type="RefSeq" id="WP_012232721.1">
    <property type="nucleotide sequence ID" value="NC_010162.1"/>
</dbReference>
<dbReference type="SMR" id="A9GL99"/>
<dbReference type="STRING" id="448385.sce0086"/>
<dbReference type="KEGG" id="scl:sce0086"/>
<dbReference type="eggNOG" id="COG0065">
    <property type="taxonomic scope" value="Bacteria"/>
</dbReference>
<dbReference type="HOGENOM" id="CLU_006714_3_4_7"/>
<dbReference type="OrthoDB" id="9764318at2"/>
<dbReference type="BioCyc" id="SCEL448385:SCE_RS00445-MONOMER"/>
<dbReference type="UniPathway" id="UPA00048">
    <property type="reaction ID" value="UER00071"/>
</dbReference>
<dbReference type="Proteomes" id="UP000002139">
    <property type="component" value="Chromosome"/>
</dbReference>
<dbReference type="GO" id="GO:0003861">
    <property type="term" value="F:3-isopropylmalate dehydratase activity"/>
    <property type="evidence" value="ECO:0007669"/>
    <property type="project" value="UniProtKB-UniRule"/>
</dbReference>
<dbReference type="GO" id="GO:0051539">
    <property type="term" value="F:4 iron, 4 sulfur cluster binding"/>
    <property type="evidence" value="ECO:0007669"/>
    <property type="project" value="UniProtKB-KW"/>
</dbReference>
<dbReference type="GO" id="GO:0046872">
    <property type="term" value="F:metal ion binding"/>
    <property type="evidence" value="ECO:0007669"/>
    <property type="project" value="UniProtKB-KW"/>
</dbReference>
<dbReference type="GO" id="GO:0009098">
    <property type="term" value="P:L-leucine biosynthetic process"/>
    <property type="evidence" value="ECO:0007669"/>
    <property type="project" value="UniProtKB-UniRule"/>
</dbReference>
<dbReference type="CDD" id="cd01583">
    <property type="entry name" value="IPMI"/>
    <property type="match status" value="1"/>
</dbReference>
<dbReference type="Gene3D" id="3.30.499.10">
    <property type="entry name" value="Aconitase, domain 3"/>
    <property type="match status" value="2"/>
</dbReference>
<dbReference type="HAMAP" id="MF_01026">
    <property type="entry name" value="LeuC_type1"/>
    <property type="match status" value="1"/>
</dbReference>
<dbReference type="InterPro" id="IPR004430">
    <property type="entry name" value="3-IsopropMal_deHydase_lsu"/>
</dbReference>
<dbReference type="InterPro" id="IPR015931">
    <property type="entry name" value="Acnase/IPM_dHydase_lsu_aba_1/3"/>
</dbReference>
<dbReference type="InterPro" id="IPR001030">
    <property type="entry name" value="Acoase/IPM_deHydtase_lsu_aba"/>
</dbReference>
<dbReference type="InterPro" id="IPR018136">
    <property type="entry name" value="Aconitase_4Fe-4S_BS"/>
</dbReference>
<dbReference type="InterPro" id="IPR036008">
    <property type="entry name" value="Aconitase_4Fe-4S_dom"/>
</dbReference>
<dbReference type="InterPro" id="IPR050067">
    <property type="entry name" value="IPM_dehydratase_rel_enz"/>
</dbReference>
<dbReference type="InterPro" id="IPR033941">
    <property type="entry name" value="IPMI_cat"/>
</dbReference>
<dbReference type="NCBIfam" id="TIGR00170">
    <property type="entry name" value="leuC"/>
    <property type="match status" value="1"/>
</dbReference>
<dbReference type="NCBIfam" id="NF004016">
    <property type="entry name" value="PRK05478.1"/>
    <property type="match status" value="1"/>
</dbReference>
<dbReference type="NCBIfam" id="NF009116">
    <property type="entry name" value="PRK12466.1"/>
    <property type="match status" value="1"/>
</dbReference>
<dbReference type="PANTHER" id="PTHR43822:SF9">
    <property type="entry name" value="3-ISOPROPYLMALATE DEHYDRATASE"/>
    <property type="match status" value="1"/>
</dbReference>
<dbReference type="PANTHER" id="PTHR43822">
    <property type="entry name" value="HOMOACONITASE, MITOCHONDRIAL-RELATED"/>
    <property type="match status" value="1"/>
</dbReference>
<dbReference type="Pfam" id="PF00330">
    <property type="entry name" value="Aconitase"/>
    <property type="match status" value="1"/>
</dbReference>
<dbReference type="PRINTS" id="PR00415">
    <property type="entry name" value="ACONITASE"/>
</dbReference>
<dbReference type="SUPFAM" id="SSF53732">
    <property type="entry name" value="Aconitase iron-sulfur domain"/>
    <property type="match status" value="1"/>
</dbReference>
<dbReference type="PROSITE" id="PS01244">
    <property type="entry name" value="ACONITASE_2"/>
    <property type="match status" value="1"/>
</dbReference>
<reference key="1">
    <citation type="journal article" date="2007" name="Nat. Biotechnol.">
        <title>Complete genome sequence of the myxobacterium Sorangium cellulosum.</title>
        <authorList>
            <person name="Schneiker S."/>
            <person name="Perlova O."/>
            <person name="Kaiser O."/>
            <person name="Gerth K."/>
            <person name="Alici A."/>
            <person name="Altmeyer M.O."/>
            <person name="Bartels D."/>
            <person name="Bekel T."/>
            <person name="Beyer S."/>
            <person name="Bode E."/>
            <person name="Bode H.B."/>
            <person name="Bolten C.J."/>
            <person name="Choudhuri J.V."/>
            <person name="Doss S."/>
            <person name="Elnakady Y.A."/>
            <person name="Frank B."/>
            <person name="Gaigalat L."/>
            <person name="Goesmann A."/>
            <person name="Groeger C."/>
            <person name="Gross F."/>
            <person name="Jelsbak L."/>
            <person name="Jelsbak L."/>
            <person name="Kalinowski J."/>
            <person name="Kegler C."/>
            <person name="Knauber T."/>
            <person name="Konietzny S."/>
            <person name="Kopp M."/>
            <person name="Krause L."/>
            <person name="Krug D."/>
            <person name="Linke B."/>
            <person name="Mahmud T."/>
            <person name="Martinez-Arias R."/>
            <person name="McHardy A.C."/>
            <person name="Merai M."/>
            <person name="Meyer F."/>
            <person name="Mormann S."/>
            <person name="Munoz-Dorado J."/>
            <person name="Perez J."/>
            <person name="Pradella S."/>
            <person name="Rachid S."/>
            <person name="Raddatz G."/>
            <person name="Rosenau F."/>
            <person name="Rueckert C."/>
            <person name="Sasse F."/>
            <person name="Scharfe M."/>
            <person name="Schuster S.C."/>
            <person name="Suen G."/>
            <person name="Treuner-Lange A."/>
            <person name="Velicer G.J."/>
            <person name="Vorholter F.-J."/>
            <person name="Weissman K.J."/>
            <person name="Welch R.D."/>
            <person name="Wenzel S.C."/>
            <person name="Whitworth D.E."/>
            <person name="Wilhelm S."/>
            <person name="Wittmann C."/>
            <person name="Bloecker H."/>
            <person name="Puehler A."/>
            <person name="Mueller R."/>
        </authorList>
    </citation>
    <scope>NUCLEOTIDE SEQUENCE [LARGE SCALE GENOMIC DNA]</scope>
    <source>
        <strain>So ce56</strain>
    </source>
</reference>
<protein>
    <recommendedName>
        <fullName evidence="1">3-isopropylmalate dehydratase large subunit</fullName>
        <ecNumber evidence="1">4.2.1.33</ecNumber>
    </recommendedName>
    <alternativeName>
        <fullName evidence="1">Alpha-IPM isomerase</fullName>
        <shortName evidence="1">IPMI</shortName>
    </alternativeName>
    <alternativeName>
        <fullName evidence="1">Isopropylmalate isomerase</fullName>
    </alternativeName>
</protein>